<organism>
    <name type="scientific">Bdellovibrio bacteriovorus (strain ATCC 15356 / DSM 50701 / NCIMB 9529 / HD100)</name>
    <dbReference type="NCBI Taxonomy" id="264462"/>
    <lineage>
        <taxon>Bacteria</taxon>
        <taxon>Pseudomonadati</taxon>
        <taxon>Bdellovibrionota</taxon>
        <taxon>Bdellovibrionia</taxon>
        <taxon>Bdellovibrionales</taxon>
        <taxon>Pseudobdellovibrionaceae</taxon>
        <taxon>Bdellovibrio</taxon>
    </lineage>
</organism>
<evidence type="ECO:0000255" key="1">
    <source>
        <dbReference type="HAMAP-Rule" id="MF_01309"/>
    </source>
</evidence>
<evidence type="ECO:0000305" key="2"/>
<keyword id="KW-1185">Reference proteome</keyword>
<keyword id="KW-0687">Ribonucleoprotein</keyword>
<keyword id="KW-0689">Ribosomal protein</keyword>
<keyword id="KW-0694">RNA-binding</keyword>
<keyword id="KW-0699">rRNA-binding</keyword>
<comment type="function">
    <text evidence="1">Binds the lower part of the 30S subunit head. Binds mRNA in the 70S ribosome, positioning it for translation.</text>
</comment>
<comment type="subunit">
    <text evidence="1">Part of the 30S ribosomal subunit. Forms a tight complex with proteins S10 and S14.</text>
</comment>
<comment type="similarity">
    <text evidence="1">Belongs to the universal ribosomal protein uS3 family.</text>
</comment>
<gene>
    <name evidence="1" type="primary">rpsC</name>
    <name type="ordered locus">Bd2970</name>
</gene>
<protein>
    <recommendedName>
        <fullName evidence="1">Small ribosomal subunit protein uS3</fullName>
    </recommendedName>
    <alternativeName>
        <fullName evidence="2">30S ribosomal protein S3</fullName>
    </alternativeName>
</protein>
<name>RS3_BDEBA</name>
<feature type="chain" id="PRO_0000130077" description="Small ribosomal subunit protein uS3">
    <location>
        <begin position="1"/>
        <end position="221"/>
    </location>
</feature>
<feature type="domain" description="KH type-2" evidence="1">
    <location>
        <begin position="39"/>
        <end position="107"/>
    </location>
</feature>
<proteinExistence type="inferred from homology"/>
<accession>Q6MJ20</accession>
<sequence length="221" mass="24720">MGQKVNPIGLRVGVIRTWDSRWYAKGQQYYENLHEDIRLRKFLKDKLKNAGVAKIEMERAAKKIKIIISTARPGVVIGKKGSGIDALKAEVQKLTPNEVFLSIQEVRKPDLDAQLVAESIAQQLEKRISWRRALKKSIAAAIKGGVRGIKIRVSGRLDGAEIARSEWYNEKSVPLHTLRADIDYGTAESLTAYGIIGLKVWIYKGDILSAREVEEAGRVKS</sequence>
<reference key="1">
    <citation type="journal article" date="2004" name="Science">
        <title>A predator unmasked: life cycle of Bdellovibrio bacteriovorus from a genomic perspective.</title>
        <authorList>
            <person name="Rendulic S."/>
            <person name="Jagtap P."/>
            <person name="Rosinus A."/>
            <person name="Eppinger M."/>
            <person name="Baar C."/>
            <person name="Lanz C."/>
            <person name="Keller H."/>
            <person name="Lambert C."/>
            <person name="Evans K.J."/>
            <person name="Goesmann A."/>
            <person name="Meyer F."/>
            <person name="Sockett R.E."/>
            <person name="Schuster S.C."/>
        </authorList>
    </citation>
    <scope>NUCLEOTIDE SEQUENCE [LARGE SCALE GENOMIC DNA]</scope>
    <source>
        <strain>ATCC 15356 / DSM 50701 / NCIMB 9529 / HD100</strain>
    </source>
</reference>
<dbReference type="EMBL" id="BX842654">
    <property type="protein sequence ID" value="CAE80742.1"/>
    <property type="molecule type" value="Genomic_DNA"/>
</dbReference>
<dbReference type="RefSeq" id="WP_011165346.1">
    <property type="nucleotide sequence ID" value="NC_005363.1"/>
</dbReference>
<dbReference type="SMR" id="Q6MJ20"/>
<dbReference type="STRING" id="264462.Bd2970"/>
<dbReference type="GeneID" id="93013833"/>
<dbReference type="KEGG" id="bba:Bd2970"/>
<dbReference type="eggNOG" id="COG0092">
    <property type="taxonomic scope" value="Bacteria"/>
</dbReference>
<dbReference type="HOGENOM" id="CLU_058591_0_2_7"/>
<dbReference type="Proteomes" id="UP000008080">
    <property type="component" value="Chromosome"/>
</dbReference>
<dbReference type="GO" id="GO:0022627">
    <property type="term" value="C:cytosolic small ribosomal subunit"/>
    <property type="evidence" value="ECO:0007669"/>
    <property type="project" value="TreeGrafter"/>
</dbReference>
<dbReference type="GO" id="GO:0003729">
    <property type="term" value="F:mRNA binding"/>
    <property type="evidence" value="ECO:0007669"/>
    <property type="project" value="UniProtKB-UniRule"/>
</dbReference>
<dbReference type="GO" id="GO:0019843">
    <property type="term" value="F:rRNA binding"/>
    <property type="evidence" value="ECO:0007669"/>
    <property type="project" value="UniProtKB-UniRule"/>
</dbReference>
<dbReference type="GO" id="GO:0003735">
    <property type="term" value="F:structural constituent of ribosome"/>
    <property type="evidence" value="ECO:0007669"/>
    <property type="project" value="InterPro"/>
</dbReference>
<dbReference type="GO" id="GO:0006412">
    <property type="term" value="P:translation"/>
    <property type="evidence" value="ECO:0007669"/>
    <property type="project" value="UniProtKB-UniRule"/>
</dbReference>
<dbReference type="CDD" id="cd02412">
    <property type="entry name" value="KH-II_30S_S3"/>
    <property type="match status" value="1"/>
</dbReference>
<dbReference type="FunFam" id="3.30.300.20:FF:000001">
    <property type="entry name" value="30S ribosomal protein S3"/>
    <property type="match status" value="1"/>
</dbReference>
<dbReference type="Gene3D" id="3.30.300.20">
    <property type="match status" value="1"/>
</dbReference>
<dbReference type="Gene3D" id="3.30.1140.32">
    <property type="entry name" value="Ribosomal protein S3, C-terminal domain"/>
    <property type="match status" value="1"/>
</dbReference>
<dbReference type="HAMAP" id="MF_01309_B">
    <property type="entry name" value="Ribosomal_uS3_B"/>
    <property type="match status" value="1"/>
</dbReference>
<dbReference type="InterPro" id="IPR004087">
    <property type="entry name" value="KH_dom"/>
</dbReference>
<dbReference type="InterPro" id="IPR015946">
    <property type="entry name" value="KH_dom-like_a/b"/>
</dbReference>
<dbReference type="InterPro" id="IPR004044">
    <property type="entry name" value="KH_dom_type_2"/>
</dbReference>
<dbReference type="InterPro" id="IPR009019">
    <property type="entry name" value="KH_sf_prok-type"/>
</dbReference>
<dbReference type="InterPro" id="IPR036419">
    <property type="entry name" value="Ribosomal_S3_C_sf"/>
</dbReference>
<dbReference type="InterPro" id="IPR005704">
    <property type="entry name" value="Ribosomal_uS3_bac-typ"/>
</dbReference>
<dbReference type="InterPro" id="IPR001351">
    <property type="entry name" value="Ribosomal_uS3_C"/>
</dbReference>
<dbReference type="NCBIfam" id="TIGR01009">
    <property type="entry name" value="rpsC_bact"/>
    <property type="match status" value="1"/>
</dbReference>
<dbReference type="PANTHER" id="PTHR11760">
    <property type="entry name" value="30S/40S RIBOSOMAL PROTEIN S3"/>
    <property type="match status" value="1"/>
</dbReference>
<dbReference type="PANTHER" id="PTHR11760:SF19">
    <property type="entry name" value="SMALL RIBOSOMAL SUBUNIT PROTEIN US3C"/>
    <property type="match status" value="1"/>
</dbReference>
<dbReference type="Pfam" id="PF07650">
    <property type="entry name" value="KH_2"/>
    <property type="match status" value="1"/>
</dbReference>
<dbReference type="Pfam" id="PF00189">
    <property type="entry name" value="Ribosomal_S3_C"/>
    <property type="match status" value="1"/>
</dbReference>
<dbReference type="SMART" id="SM00322">
    <property type="entry name" value="KH"/>
    <property type="match status" value="1"/>
</dbReference>
<dbReference type="SUPFAM" id="SSF54814">
    <property type="entry name" value="Prokaryotic type KH domain (KH-domain type II)"/>
    <property type="match status" value="1"/>
</dbReference>
<dbReference type="SUPFAM" id="SSF54821">
    <property type="entry name" value="Ribosomal protein S3 C-terminal domain"/>
    <property type="match status" value="1"/>
</dbReference>
<dbReference type="PROSITE" id="PS50823">
    <property type="entry name" value="KH_TYPE_2"/>
    <property type="match status" value="1"/>
</dbReference>